<keyword id="KW-0560">Oxidoreductase</keyword>
<comment type="function">
    <text evidence="1">Has an important function as a repair enzyme for proteins that have been inactivated by oxidation. Catalyzes the reversible oxidation-reduction of methionine sulfoxide in proteins to methionine.</text>
</comment>
<comment type="catalytic activity">
    <reaction evidence="1">
        <text>L-methionyl-[protein] + [thioredoxin]-disulfide + H2O = L-methionyl-(S)-S-oxide-[protein] + [thioredoxin]-dithiol</text>
        <dbReference type="Rhea" id="RHEA:14217"/>
        <dbReference type="Rhea" id="RHEA-COMP:10698"/>
        <dbReference type="Rhea" id="RHEA-COMP:10700"/>
        <dbReference type="Rhea" id="RHEA-COMP:12313"/>
        <dbReference type="Rhea" id="RHEA-COMP:12315"/>
        <dbReference type="ChEBI" id="CHEBI:15377"/>
        <dbReference type="ChEBI" id="CHEBI:16044"/>
        <dbReference type="ChEBI" id="CHEBI:29950"/>
        <dbReference type="ChEBI" id="CHEBI:44120"/>
        <dbReference type="ChEBI" id="CHEBI:50058"/>
        <dbReference type="EC" id="1.8.4.11"/>
    </reaction>
</comment>
<comment type="catalytic activity">
    <reaction evidence="1">
        <text>[thioredoxin]-disulfide + L-methionine + H2O = L-methionine (S)-S-oxide + [thioredoxin]-dithiol</text>
        <dbReference type="Rhea" id="RHEA:19993"/>
        <dbReference type="Rhea" id="RHEA-COMP:10698"/>
        <dbReference type="Rhea" id="RHEA-COMP:10700"/>
        <dbReference type="ChEBI" id="CHEBI:15377"/>
        <dbReference type="ChEBI" id="CHEBI:29950"/>
        <dbReference type="ChEBI" id="CHEBI:50058"/>
        <dbReference type="ChEBI" id="CHEBI:57844"/>
        <dbReference type="ChEBI" id="CHEBI:58772"/>
        <dbReference type="EC" id="1.8.4.11"/>
    </reaction>
</comment>
<comment type="similarity">
    <text evidence="1">Belongs to the MsrA Met sulfoxide reductase family.</text>
</comment>
<proteinExistence type="inferred from homology"/>
<protein>
    <recommendedName>
        <fullName evidence="1">Peptide methionine sulfoxide reductase MsrA</fullName>
        <shortName evidence="1">Protein-methionine-S-oxide reductase</shortName>
        <ecNumber evidence="1">1.8.4.11</ecNumber>
    </recommendedName>
    <alternativeName>
        <fullName evidence="1">Peptide-methionine (S)-S-oxide reductase</fullName>
        <shortName evidence="1">Peptide Met(O) reductase</shortName>
    </alternativeName>
</protein>
<accession>B5XK66</accession>
<evidence type="ECO:0000255" key="1">
    <source>
        <dbReference type="HAMAP-Rule" id="MF_01401"/>
    </source>
</evidence>
<sequence length="169" mass="19452">MERAIFAGGCFWCMVQPFEEQAGILSVRSGYTGGHLPNPSYEQVCAKTTGHTEAVEIIFDPKQIAYKDLVELYWAQTDPTDAFGQFEDRGDNYRPVIYYTTERQKEIAEQSKANLQASGRFDQPIVTTIEPAEPFYLAEDYHQGFYKKNPKRYAQSSAIRHQFLEENWS</sequence>
<dbReference type="EC" id="1.8.4.11" evidence="1"/>
<dbReference type="EMBL" id="CP000829">
    <property type="protein sequence ID" value="ACI60728.1"/>
    <property type="molecule type" value="Genomic_DNA"/>
</dbReference>
<dbReference type="SMR" id="B5XK66"/>
<dbReference type="KEGG" id="soz:Spy49_0394"/>
<dbReference type="HOGENOM" id="CLU_031040_10_1_9"/>
<dbReference type="Proteomes" id="UP000001039">
    <property type="component" value="Chromosome"/>
</dbReference>
<dbReference type="GO" id="GO:0033744">
    <property type="term" value="F:L-methionine:thioredoxin-disulfide S-oxidoreductase activity"/>
    <property type="evidence" value="ECO:0007669"/>
    <property type="project" value="RHEA"/>
</dbReference>
<dbReference type="GO" id="GO:0008113">
    <property type="term" value="F:peptide-methionine (S)-S-oxide reductase activity"/>
    <property type="evidence" value="ECO:0007669"/>
    <property type="project" value="UniProtKB-UniRule"/>
</dbReference>
<dbReference type="GO" id="GO:0036211">
    <property type="term" value="P:protein modification process"/>
    <property type="evidence" value="ECO:0007669"/>
    <property type="project" value="UniProtKB-UniRule"/>
</dbReference>
<dbReference type="Gene3D" id="3.30.1060.10">
    <property type="entry name" value="Peptide methionine sulphoxide reductase MsrA"/>
    <property type="match status" value="1"/>
</dbReference>
<dbReference type="HAMAP" id="MF_01401">
    <property type="entry name" value="MsrA"/>
    <property type="match status" value="1"/>
</dbReference>
<dbReference type="InterPro" id="IPR002569">
    <property type="entry name" value="Met_Sox_Rdtase_MsrA_dom"/>
</dbReference>
<dbReference type="InterPro" id="IPR036509">
    <property type="entry name" value="Met_Sox_Rdtase_MsrA_sf"/>
</dbReference>
<dbReference type="NCBIfam" id="TIGR00401">
    <property type="entry name" value="msrA"/>
    <property type="match status" value="1"/>
</dbReference>
<dbReference type="PANTHER" id="PTHR43774">
    <property type="entry name" value="PEPTIDE METHIONINE SULFOXIDE REDUCTASE"/>
    <property type="match status" value="1"/>
</dbReference>
<dbReference type="PANTHER" id="PTHR43774:SF1">
    <property type="entry name" value="PEPTIDE METHIONINE SULFOXIDE REDUCTASE MSRA 2"/>
    <property type="match status" value="1"/>
</dbReference>
<dbReference type="Pfam" id="PF01625">
    <property type="entry name" value="PMSR"/>
    <property type="match status" value="1"/>
</dbReference>
<dbReference type="SUPFAM" id="SSF55068">
    <property type="entry name" value="Peptide methionine sulfoxide reductase"/>
    <property type="match status" value="1"/>
</dbReference>
<organism>
    <name type="scientific">Streptococcus pyogenes serotype M49 (strain NZ131)</name>
    <dbReference type="NCBI Taxonomy" id="471876"/>
    <lineage>
        <taxon>Bacteria</taxon>
        <taxon>Bacillati</taxon>
        <taxon>Bacillota</taxon>
        <taxon>Bacilli</taxon>
        <taxon>Lactobacillales</taxon>
        <taxon>Streptococcaceae</taxon>
        <taxon>Streptococcus</taxon>
    </lineage>
</organism>
<reference key="1">
    <citation type="journal article" date="2008" name="J. Bacteriol.">
        <title>Genome sequence of a nephritogenic and highly transformable M49 strain of Streptococcus pyogenes.</title>
        <authorList>
            <person name="McShan W.M."/>
            <person name="Ferretti J.J."/>
            <person name="Karasawa T."/>
            <person name="Suvorov A.N."/>
            <person name="Lin S."/>
            <person name="Qin B."/>
            <person name="Jia H."/>
            <person name="Kenton S."/>
            <person name="Najar F."/>
            <person name="Wu H."/>
            <person name="Scott J."/>
            <person name="Roe B.A."/>
            <person name="Savic D.J."/>
        </authorList>
    </citation>
    <scope>NUCLEOTIDE SEQUENCE [LARGE SCALE GENOMIC DNA]</scope>
    <source>
        <strain>NZ131</strain>
    </source>
</reference>
<name>MSRA_STRPZ</name>
<feature type="chain" id="PRO_1000145441" description="Peptide methionine sulfoxide reductase MsrA">
    <location>
        <begin position="1"/>
        <end position="169"/>
    </location>
</feature>
<feature type="active site" evidence="1">
    <location>
        <position position="10"/>
    </location>
</feature>
<gene>
    <name evidence="1" type="primary">msrA</name>
    <name type="ordered locus">Spy49_0394</name>
</gene>